<accession>B8XIA5</accession>
<accession>H9Z974</accession>
<gene>
    <name type="primary">MYC</name>
</gene>
<name>MYC_MACMU</name>
<comment type="function">
    <text evidence="2 3">Transcription factor that binds DNA in a non-specific manner, yet also specifically recognizes the core sequence 5'-CAC[GA]TG-3'. Activates the transcription of growth-related genes. Binds to the VEGFA promoter, promoting VEGFA production and subsequent sprouting angiogenesis. Regulator of somatic reprogramming, controls self-renewal of embryonic stem cells. Functions with TAF6L to activate target gene expression through RNA polymerase II pause release (By similarity). Positively regulates transcription of HNRNPA1, HNRNPA2 and PTBP1 which in turn regulate splicing of pyruvate kinase PKM by binding repressively to sequences flanking PKM exon 9, inhibiting exon 9 inclusion and resulting in exon 10 inclusion and production of the PKM M2 isoform (By similarity).</text>
</comment>
<comment type="subunit">
    <text evidence="2 3">Efficient DNA binding requires dimerization with another bHLH protein. Binds DNA as a heterodimer with MAX (By similarity). Interacts with TAF1C and SPAG9. Interacts with PARP10. Interacts with KDM5A and KDM5B. Interacts (when phosphorylated at Thr-73 and Ser-77) with FBXW7. Interacts with PIM2. Interacts with RIOX1. The heterodimer MYC:MAX interacts with ABI1; the interaction may enhance MYC:MAX transcriptional activity. Interacts with TRIM6 (By similarity). Interacts with NPM1; the binary complex is recruited to the promoter of MYC target genes and enhances their transcription (By similarity). Interacts with CIP2A; leading to the stabilization of MYC (By similarity). Interacts with NUP205 (By similarity). Interacts with HEATR1; the interaction is required for localization of MYC to the nucleolus (By similarity).</text>
</comment>
<comment type="subcellular location">
    <subcellularLocation>
        <location evidence="2">Nucleus</location>
        <location evidence="2">Nucleoplasm</location>
    </subcellularLocation>
    <subcellularLocation>
        <location evidence="2">Nucleus</location>
        <location evidence="2">Nucleolus</location>
    </subcellularLocation>
    <subcellularLocation>
        <location evidence="2">Nucleus</location>
    </subcellularLocation>
    <subcellularLocation>
        <location evidence="2">Cytoplasm</location>
    </subcellularLocation>
    <subcellularLocation>
        <location evidence="2">Chromosome</location>
    </subcellularLocation>
    <text evidence="2">Association with chromatin is reduced by hyperphosphorylation. Localization to the nucleolus is dependent on HEATR1.</text>
</comment>
<comment type="alternative products">
    <event type="alternative initiation"/>
    <isoform>
        <id>B8XIA5-1</id>
        <name>2</name>
        <name evidence="7">c-myc 1</name>
        <sequence type="displayed"/>
    </isoform>
    <isoform>
        <id>B8XIA5-2</id>
        <name>1</name>
        <name evidence="7">c-myc 2</name>
        <sequence type="described" ref="VSP_061780"/>
    </isoform>
</comment>
<comment type="domain">
    <text evidence="2">The 9aaTAD motif is a transactivation domain present in a large number of yeast and animal transcription factors.</text>
</comment>
<comment type="PTM">
    <text evidence="2 3">Phosphorylated by PRKDC (By similarity). Phosphorylation at Ser-344 by PIM2 leads to the stabilization of MYC (By similarity). Phosphorylation at Ser-77 by CDK2 prevents Ras-induced senescence. Phosphorylated at Ser-77 by DYRK2; this primes the protein for subsequent phosphorylation by GSK3B at Thr-73. Phosphorylation at Thr-73 and Ser-77 by GSK3 is required for ubiquitination and degradation by the proteasome. Dephosphorylation at multiple sites by the PNUTS-PP1 complex promotes MYC stability by preventing ubiquitination by the SCF(FBXW7) complex. Dephosphorylation at Ser-77 by protein phosphatase 2A (PPP2CA) promotes its degradation; interaction with PPP2CA is enhanced by AMBRA1 (By similarity).</text>
</comment>
<comment type="PTM">
    <text evidence="2 3">Ubiquitinated by the SCF(FBXW7) complex when phosphorylated at Thr-73 and Ser-77, leading to its degradation by the proteasome. Ubiquitination is counteracted by USP28 in the nucleoplasm and USP36 in the nucleolus, both interacting with of FBXW7, leading to its deubiquitination and preventing degradation. Also polyubiquitinated by the DCX(TRPC4AP) complex. Ubiquitinated by UBR5 when not forming a heterodimer with another bHLH protein, leading to its degradation: UBR5 recognizes and binds a degron that is only available upon heterodimer dissociation (By similarity). Ubiquitinated by TRIM6 in a phosphorylation-independent manner.</text>
</comment>
<comment type="biotechnology">
    <text evidence="6">POU5F1/OCT4, SOX2, MYC/c-Myc and KLF4 are the four Yamanaka factors. When combined, these factors are sufficient to reprogram differentiated cells to an embryonic-like state designated iPS (induced pluripotent stem) cells. iPS cells exhibit the morphology and growth properties of ES cells and express ES cell marker genes.</text>
</comment>
<comment type="miscellaneous">
    <text evidence="8">Alternative translation initiation from an upstream, in-frame non-ATG (CTG) codon or a downstream ATG start site results in the production of 2 isoforms with distinct N-termini, shown in this entry as isoform 2 and isoform 1, respectively.</text>
</comment>
<comment type="miscellaneous">
    <molecule>Isoform 2</molecule>
    <text evidence="8">Produced by alternative translation initiation from a CTG codon, which is translated as Met.</text>
</comment>
<keyword id="KW-0007">Acetylation</keyword>
<keyword id="KW-0010">Activator</keyword>
<keyword id="KW-0024">Alternative initiation</keyword>
<keyword id="KW-0158">Chromosome</keyword>
<keyword id="KW-0963">Cytoplasm</keyword>
<keyword id="KW-0238">DNA-binding</keyword>
<keyword id="KW-0325">Glycoprotein</keyword>
<keyword id="KW-1017">Isopeptide bond</keyword>
<keyword id="KW-0539">Nucleus</keyword>
<keyword id="KW-0597">Phosphoprotein</keyword>
<keyword id="KW-0656">Proto-oncogene</keyword>
<keyword id="KW-1185">Reference proteome</keyword>
<keyword id="KW-0804">Transcription</keyword>
<keyword id="KW-0805">Transcription regulation</keyword>
<keyword id="KW-0832">Ubl conjugation</keyword>
<organism>
    <name type="scientific">Macaca mulatta</name>
    <name type="common">Rhesus macaque</name>
    <dbReference type="NCBI Taxonomy" id="9544"/>
    <lineage>
        <taxon>Eukaryota</taxon>
        <taxon>Metazoa</taxon>
        <taxon>Chordata</taxon>
        <taxon>Craniata</taxon>
        <taxon>Vertebrata</taxon>
        <taxon>Euteleostomi</taxon>
        <taxon>Mammalia</taxon>
        <taxon>Eutheria</taxon>
        <taxon>Euarchontoglires</taxon>
        <taxon>Primates</taxon>
        <taxon>Haplorrhini</taxon>
        <taxon>Catarrhini</taxon>
        <taxon>Cercopithecidae</taxon>
        <taxon>Cercopithecinae</taxon>
        <taxon>Macaca</taxon>
    </lineage>
</organism>
<dbReference type="EMBL" id="FJ375753">
    <property type="protein sequence ID" value="ACJ74398.1"/>
    <property type="molecule type" value="mRNA"/>
</dbReference>
<dbReference type="EMBL" id="JU475686">
    <property type="protein sequence ID" value="AFH32490.1"/>
    <property type="molecule type" value="mRNA"/>
</dbReference>
<dbReference type="EMBL" id="JV047129">
    <property type="protein sequence ID" value="AFI37200.1"/>
    <property type="molecule type" value="mRNA"/>
</dbReference>
<dbReference type="EMBL" id="JV636169">
    <property type="protein sequence ID" value="AFJ71509.1"/>
    <property type="molecule type" value="mRNA"/>
</dbReference>
<dbReference type="RefSeq" id="NP_001136345.1">
    <molecule id="B8XIA5-2"/>
    <property type="nucleotide sequence ID" value="NM_001142873.1"/>
</dbReference>
<dbReference type="RefSeq" id="NP_001422710.1">
    <molecule id="B8XIA5-1"/>
    <property type="nucleotide sequence ID" value="NM_001435781.1"/>
</dbReference>
<dbReference type="RefSeq" id="XP_015001416.1">
    <molecule id="B8XIA5-2"/>
    <property type="nucleotide sequence ID" value="XM_015145930.1"/>
</dbReference>
<dbReference type="RefSeq" id="XP_028707952.1">
    <molecule id="B8XIA5-2"/>
    <property type="nucleotide sequence ID" value="XM_028852119.1"/>
</dbReference>
<dbReference type="SMR" id="B8XIA5"/>
<dbReference type="FunCoup" id="B8XIA5">
    <property type="interactions" value="3762"/>
</dbReference>
<dbReference type="STRING" id="9544.ENSMMUP00000019164"/>
<dbReference type="GlyCosmos" id="B8XIA5">
    <property type="glycosylation" value="1 site, No reported glycans"/>
</dbReference>
<dbReference type="PaxDb" id="9544-ENSMMUP00000019164"/>
<dbReference type="Ensembl" id="ENSMMUT00000058254.2">
    <molecule id="B8XIA5-2"/>
    <property type="protein sequence ID" value="ENSMMUP00000056069.2"/>
    <property type="gene ID" value="ENSMMUG00000014601.4"/>
</dbReference>
<dbReference type="GeneID" id="694626"/>
<dbReference type="KEGG" id="mcc:694626"/>
<dbReference type="CTD" id="4609"/>
<dbReference type="VEuPathDB" id="HostDB:ENSMMUG00000014601"/>
<dbReference type="eggNOG" id="KOG2483">
    <property type="taxonomic scope" value="Eukaryota"/>
</dbReference>
<dbReference type="GeneTree" id="ENSGT00940000155285"/>
<dbReference type="HOGENOM" id="CLU_052560_0_0_1"/>
<dbReference type="InParanoid" id="B8XIA5"/>
<dbReference type="OMA" id="FPYPLHD"/>
<dbReference type="OrthoDB" id="5964374at2759"/>
<dbReference type="TreeFam" id="TF106001"/>
<dbReference type="Proteomes" id="UP000006718">
    <property type="component" value="Chromosome 8"/>
</dbReference>
<dbReference type="Bgee" id="ENSMMUG00000014601">
    <property type="expression patterns" value="Expressed in adipose tissue and 21 other cell types or tissues"/>
</dbReference>
<dbReference type="ExpressionAtlas" id="B8XIA5">
    <property type="expression patterns" value="baseline"/>
</dbReference>
<dbReference type="GO" id="GO:0005737">
    <property type="term" value="C:cytoplasm"/>
    <property type="evidence" value="ECO:0007669"/>
    <property type="project" value="UniProtKB-SubCell"/>
</dbReference>
<dbReference type="GO" id="GO:0005730">
    <property type="term" value="C:nucleolus"/>
    <property type="evidence" value="ECO:0000250"/>
    <property type="project" value="UniProtKB"/>
</dbReference>
<dbReference type="GO" id="GO:0005654">
    <property type="term" value="C:nucleoplasm"/>
    <property type="evidence" value="ECO:0000250"/>
    <property type="project" value="UniProtKB"/>
</dbReference>
<dbReference type="GO" id="GO:0005634">
    <property type="term" value="C:nucleus"/>
    <property type="evidence" value="ECO:0000250"/>
    <property type="project" value="UniProtKB"/>
</dbReference>
<dbReference type="GO" id="GO:0003677">
    <property type="term" value="F:DNA binding"/>
    <property type="evidence" value="ECO:0000250"/>
    <property type="project" value="UniProtKB"/>
</dbReference>
<dbReference type="GO" id="GO:0000981">
    <property type="term" value="F:DNA-binding transcription factor activity, RNA polymerase II-specific"/>
    <property type="evidence" value="ECO:0000250"/>
    <property type="project" value="UniProtKB"/>
</dbReference>
<dbReference type="GO" id="GO:0070888">
    <property type="term" value="F:E-box binding"/>
    <property type="evidence" value="ECO:0000250"/>
    <property type="project" value="UniProtKB"/>
</dbReference>
<dbReference type="GO" id="GO:0046983">
    <property type="term" value="F:protein dimerization activity"/>
    <property type="evidence" value="ECO:0007669"/>
    <property type="project" value="InterPro"/>
</dbReference>
<dbReference type="GO" id="GO:0044877">
    <property type="term" value="F:protein-containing complex binding"/>
    <property type="evidence" value="ECO:0000250"/>
    <property type="project" value="UniProtKB"/>
</dbReference>
<dbReference type="GO" id="GO:0000978">
    <property type="term" value="F:RNA polymerase II cis-regulatory region sequence-specific DNA binding"/>
    <property type="evidence" value="ECO:0000318"/>
    <property type="project" value="GO_Central"/>
</dbReference>
<dbReference type="GO" id="GO:0006338">
    <property type="term" value="P:chromatin remodeling"/>
    <property type="evidence" value="ECO:0000250"/>
    <property type="project" value="UniProtKB"/>
</dbReference>
<dbReference type="GO" id="GO:0051276">
    <property type="term" value="P:chromosome organization"/>
    <property type="evidence" value="ECO:0000250"/>
    <property type="project" value="UniProtKB"/>
</dbReference>
<dbReference type="GO" id="GO:0006974">
    <property type="term" value="P:DNA damage response"/>
    <property type="evidence" value="ECO:0000250"/>
    <property type="project" value="UniProtKB"/>
</dbReference>
<dbReference type="GO" id="GO:0000082">
    <property type="term" value="P:G1/S transition of mitotic cell cycle"/>
    <property type="evidence" value="ECO:0000250"/>
    <property type="project" value="UniProtKB"/>
</dbReference>
<dbReference type="GO" id="GO:0006879">
    <property type="term" value="P:intracellular iron ion homeostasis"/>
    <property type="evidence" value="ECO:0000250"/>
    <property type="project" value="UniProtKB"/>
</dbReference>
<dbReference type="GO" id="GO:0000165">
    <property type="term" value="P:MAPK cascade"/>
    <property type="evidence" value="ECO:0000250"/>
    <property type="project" value="UniProtKB"/>
</dbReference>
<dbReference type="GO" id="GO:0043066">
    <property type="term" value="P:negative regulation of apoptotic process"/>
    <property type="evidence" value="ECO:0000250"/>
    <property type="project" value="UniProtKB"/>
</dbReference>
<dbReference type="GO" id="GO:0051782">
    <property type="term" value="P:negative regulation of cell division"/>
    <property type="evidence" value="ECO:0000250"/>
    <property type="project" value="UniProtKB"/>
</dbReference>
<dbReference type="GO" id="GO:0045656">
    <property type="term" value="P:negative regulation of monocyte differentiation"/>
    <property type="evidence" value="ECO:0000250"/>
    <property type="project" value="UniProtKB"/>
</dbReference>
<dbReference type="GO" id="GO:0032873">
    <property type="term" value="P:negative regulation of stress-activated MAPK cascade"/>
    <property type="evidence" value="ECO:0000250"/>
    <property type="project" value="UniProtKB"/>
</dbReference>
<dbReference type="GO" id="GO:0008284">
    <property type="term" value="P:positive regulation of cell population proliferation"/>
    <property type="evidence" value="ECO:0000318"/>
    <property type="project" value="GO_Central"/>
</dbReference>
<dbReference type="GO" id="GO:0045893">
    <property type="term" value="P:positive regulation of DNA-templated transcription"/>
    <property type="evidence" value="ECO:0000250"/>
    <property type="project" value="UniProtKB"/>
</dbReference>
<dbReference type="GO" id="GO:0050679">
    <property type="term" value="P:positive regulation of epithelial cell proliferation"/>
    <property type="evidence" value="ECO:0000250"/>
    <property type="project" value="UniProtKB"/>
</dbReference>
<dbReference type="GO" id="GO:0048146">
    <property type="term" value="P:positive regulation of fibroblast proliferation"/>
    <property type="evidence" value="ECO:0000250"/>
    <property type="project" value="UniProtKB"/>
</dbReference>
<dbReference type="GO" id="GO:0045944">
    <property type="term" value="P:positive regulation of transcription by RNA polymerase II"/>
    <property type="evidence" value="ECO:0000250"/>
    <property type="project" value="UniProtKB"/>
</dbReference>
<dbReference type="GO" id="GO:0006355">
    <property type="term" value="P:regulation of DNA-templated transcription"/>
    <property type="evidence" value="ECO:0000250"/>
    <property type="project" value="UniProtKB"/>
</dbReference>
<dbReference type="GO" id="GO:1904672">
    <property type="term" value="P:regulation of somatic stem cell population maintenance"/>
    <property type="evidence" value="ECO:0000250"/>
    <property type="project" value="UniProtKB"/>
</dbReference>
<dbReference type="GO" id="GO:0032204">
    <property type="term" value="P:regulation of telomere maintenance"/>
    <property type="evidence" value="ECO:0000250"/>
    <property type="project" value="UniProtKB"/>
</dbReference>
<dbReference type="GO" id="GO:0006357">
    <property type="term" value="P:regulation of transcription by RNA polymerase II"/>
    <property type="evidence" value="ECO:0000318"/>
    <property type="project" value="GO_Central"/>
</dbReference>
<dbReference type="GO" id="GO:0009410">
    <property type="term" value="P:response to xenobiotic stimulus"/>
    <property type="evidence" value="ECO:0000250"/>
    <property type="project" value="UniProtKB"/>
</dbReference>
<dbReference type="GO" id="GO:0016072">
    <property type="term" value="P:rRNA metabolic process"/>
    <property type="evidence" value="ECO:0000250"/>
    <property type="project" value="UniProtKB"/>
</dbReference>
<dbReference type="CDD" id="cd11458">
    <property type="entry name" value="bHLHzip_c-Myc"/>
    <property type="match status" value="1"/>
</dbReference>
<dbReference type="FunFam" id="4.10.280.10:FF:000019">
    <property type="entry name" value="Myc proto-oncogene protein"/>
    <property type="match status" value="1"/>
</dbReference>
<dbReference type="Gene3D" id="4.10.280.10">
    <property type="entry name" value="Helix-loop-helix DNA-binding domain"/>
    <property type="match status" value="1"/>
</dbReference>
<dbReference type="InterPro" id="IPR011598">
    <property type="entry name" value="bHLH_dom"/>
</dbReference>
<dbReference type="InterPro" id="IPR036638">
    <property type="entry name" value="HLH_DNA-bd_sf"/>
</dbReference>
<dbReference type="InterPro" id="IPR003327">
    <property type="entry name" value="Myc-LZ"/>
</dbReference>
<dbReference type="InterPro" id="IPR050433">
    <property type="entry name" value="Myc_transcription_factors"/>
</dbReference>
<dbReference type="InterPro" id="IPR002418">
    <property type="entry name" value="Tscrpt_reg_Myc"/>
</dbReference>
<dbReference type="InterPro" id="IPR012682">
    <property type="entry name" value="Tscrpt_reg_Myc_N"/>
</dbReference>
<dbReference type="PANTHER" id="PTHR45851">
    <property type="entry name" value="MYC PROTO-ONCOGENE"/>
    <property type="match status" value="1"/>
</dbReference>
<dbReference type="Pfam" id="PF00010">
    <property type="entry name" value="HLH"/>
    <property type="match status" value="1"/>
</dbReference>
<dbReference type="Pfam" id="PF02344">
    <property type="entry name" value="Myc-LZ"/>
    <property type="match status" value="1"/>
</dbReference>
<dbReference type="Pfam" id="PF01056">
    <property type="entry name" value="Myc_N"/>
    <property type="match status" value="1"/>
</dbReference>
<dbReference type="PIRSF" id="PIRSF001705">
    <property type="entry name" value="Myc_protein"/>
    <property type="match status" value="1"/>
</dbReference>
<dbReference type="PRINTS" id="PR00044">
    <property type="entry name" value="LEUZIPPRMYC"/>
</dbReference>
<dbReference type="SMART" id="SM00353">
    <property type="entry name" value="HLH"/>
    <property type="match status" value="1"/>
</dbReference>
<dbReference type="SUPFAM" id="SSF47459">
    <property type="entry name" value="HLH, helix-loop-helix DNA-binding domain"/>
    <property type="match status" value="1"/>
</dbReference>
<dbReference type="PROSITE" id="PS50888">
    <property type="entry name" value="BHLH"/>
    <property type="match status" value="1"/>
</dbReference>
<evidence type="ECO:0000250" key="1"/>
<evidence type="ECO:0000250" key="2">
    <source>
        <dbReference type="UniProtKB" id="P01106"/>
    </source>
</evidence>
<evidence type="ECO:0000250" key="3">
    <source>
        <dbReference type="UniProtKB" id="P01108"/>
    </source>
</evidence>
<evidence type="ECO:0000255" key="4">
    <source>
        <dbReference type="PROSITE-ProRule" id="PRU00981"/>
    </source>
</evidence>
<evidence type="ECO:0000256" key="5">
    <source>
        <dbReference type="SAM" id="MobiDB-lite"/>
    </source>
</evidence>
<evidence type="ECO:0000269" key="6">
    <source>
    </source>
</evidence>
<evidence type="ECO:0000303" key="7">
    <source>
    </source>
</evidence>
<evidence type="ECO:0000305" key="8">
    <source>
    </source>
</evidence>
<sequence length="454" mass="50502">MDFFPVVENQQPPATMPLNVSFTNRNYDLDYDSVQPYFYCDEEENFYQQQQQSELQPPAPSEDIWKKFELLPTPPLSPSRRSGLCSPSYVAVTPFSPRGDNDGGGGSFSTADQLEMVTELLGGDMVNQSFICDPDDETFIKNIIIQDCMWSGFSAAAKLVSEKLASYQAARKDSGSPNPARGHSVCSTSSLYLQDLSAAASECIDPSVVFPYPLNDSSSPKSCASPDSSAFSPSSDSLLSSTESSPQASPEPLVLHEETPPTTSSDSEEEQEEEEEIDVVSVEKRQAPGKRSESGSPSAGGHSKPPHSPLVLKRCHVSTHQHNYAAPPSTRKDYPAAKRVKLDSVRVLRQISNNRKCTSPRSSDTEENDKRRTHNVLERQRRNELKRSFFALRDQIPELENNEKAPKVVILKKATAYILSVQAEEQKLISEKDLLRKRREQLKHKLEQLRNSCA</sequence>
<proteinExistence type="evidence at protein level"/>
<reference key="1">
    <citation type="submission" date="2008-10" db="EMBL/GenBank/DDBJ databases">
        <authorList>
            <person name="Liu H."/>
            <person name="Li H."/>
            <person name="Deng H."/>
        </authorList>
    </citation>
    <scope>NUCLEOTIDE SEQUENCE [MRNA] (ISOFORM 1)</scope>
    <source>
        <tissue>Embryonic stem cell</tissue>
    </source>
</reference>
<reference key="2">
    <citation type="journal article" date="2014" name="Biol. Direct">
        <title>A new rhesus macaque assembly and annotation for next-generation sequencing analyses.</title>
        <authorList>
            <person name="Zimin A.V."/>
            <person name="Cornish A.S."/>
            <person name="Maudhoo M.D."/>
            <person name="Gibbs R.M."/>
            <person name="Zhang X."/>
            <person name="Pandey S."/>
            <person name="Meehan D.T."/>
            <person name="Wipfler K."/>
            <person name="Bosinger S.E."/>
            <person name="Johnson Z.P."/>
            <person name="Tharp G.K."/>
            <person name="Marcais G."/>
            <person name="Roberts M."/>
            <person name="Ferguson B."/>
            <person name="Fox H.S."/>
            <person name="Treangen T."/>
            <person name="Salzberg S.L."/>
            <person name="Yorke J.A."/>
            <person name="Norgren R.B. Jr."/>
        </authorList>
    </citation>
    <scope>NUCLEOTIDE SEQUENCE [LARGE SCALE MRNA] (ISOFORM 2)</scope>
    <source>
        <tissue>Testis</tissue>
        <tissue>Thymus</tissue>
    </source>
</reference>
<reference key="3">
    <citation type="journal article" date="1988" name="Cell">
        <title>A non-AUG translational initiation in c-myc exon 1 generates an N-terminally distinct protein whose synthesis is disrupted in Burkitt's lymphomas.</title>
        <authorList>
            <person name="Hann S.R."/>
            <person name="King M.W."/>
            <person name="Bentley D.L."/>
            <person name="Anderson C.W."/>
            <person name="Eisenman R.N."/>
        </authorList>
    </citation>
    <scope>ALTERNATIVE TRANSLATION INITIATION</scope>
</reference>
<reference key="4">
    <citation type="journal article" date="2008" name="Cell Stem Cell">
        <title>Generation of induced pluripotent stem cells from adult rhesus monkey fibroblasts.</title>
        <authorList>
            <person name="Liu H."/>
            <person name="Zhu F."/>
            <person name="Yong J."/>
            <person name="Zhang P."/>
            <person name="Hou P."/>
            <person name="Li H."/>
            <person name="Jiang W."/>
            <person name="Cai J."/>
            <person name="Liu M."/>
            <person name="Cui K."/>
            <person name="Qu X."/>
            <person name="Xiang T."/>
            <person name="Lu D."/>
            <person name="Chi X."/>
            <person name="Gao G."/>
            <person name="Ji W."/>
            <person name="Ding M."/>
            <person name="Deng H."/>
        </authorList>
    </citation>
    <scope>BIOTECHNOLOGY</scope>
</reference>
<feature type="chain" id="PRO_0000380700" description="Myc proto-oncogene protein">
    <location>
        <begin position="1"/>
        <end position="454"/>
    </location>
</feature>
<feature type="domain" description="bHLH" evidence="4">
    <location>
        <begin position="369"/>
        <end position="421"/>
    </location>
</feature>
<feature type="region of interest" description="Disordered" evidence="5">
    <location>
        <begin position="216"/>
        <end position="310"/>
    </location>
</feature>
<feature type="region of interest" description="Disordered" evidence="5">
    <location>
        <begin position="349"/>
        <end position="380"/>
    </location>
</feature>
<feature type="region of interest" description="Leucine-zipper">
    <location>
        <begin position="428"/>
        <end position="449"/>
    </location>
</feature>
<feature type="short sequence motif" description="9aaTAD" evidence="2">
    <location>
        <begin position="115"/>
        <end position="123"/>
    </location>
</feature>
<feature type="short sequence motif" description="UBR5-degron" evidence="2">
    <location>
        <begin position="370"/>
        <end position="379"/>
    </location>
</feature>
<feature type="compositionally biased region" description="Low complexity" evidence="5">
    <location>
        <begin position="216"/>
        <end position="252"/>
    </location>
</feature>
<feature type="compositionally biased region" description="Acidic residues" evidence="5">
    <location>
        <begin position="266"/>
        <end position="278"/>
    </location>
</feature>
<feature type="compositionally biased region" description="Basic and acidic residues" evidence="5">
    <location>
        <begin position="281"/>
        <end position="293"/>
    </location>
</feature>
<feature type="compositionally biased region" description="Polar residues" evidence="5">
    <location>
        <begin position="350"/>
        <end position="362"/>
    </location>
</feature>
<feature type="modified residue" description="Phosphoserine" evidence="2">
    <location>
        <position position="21"/>
    </location>
</feature>
<feature type="modified residue" description="Phosphothreonine" evidence="2">
    <location>
        <position position="23"/>
    </location>
</feature>
<feature type="modified residue" description="Phosphothreonine; by GSK3; alternate" evidence="2">
    <location>
        <position position="73"/>
    </location>
</feature>
<feature type="modified residue" description="Phosphoserine; by DYRK2, GSK3 and CDK2" evidence="2">
    <location>
        <position position="77"/>
    </location>
</feature>
<feature type="modified residue" description="Phosphoserine" evidence="2">
    <location>
        <position position="86"/>
    </location>
</feature>
<feature type="modified residue" description="Phosphoserine" evidence="2">
    <location>
        <position position="96"/>
    </location>
</feature>
<feature type="modified residue" description="N6-acetyllysine; by PCAF; alternate" evidence="2">
    <location>
        <position position="158"/>
    </location>
</feature>
<feature type="modified residue" description="N6-acetyllysine; alternate" evidence="2">
    <location>
        <position position="163"/>
    </location>
</feature>
<feature type="modified residue" description="Phosphoserine" evidence="2">
    <location>
        <position position="166"/>
    </location>
</feature>
<feature type="modified residue" description="N6-acetyllysine; by PCAF" evidence="2">
    <location>
        <position position="172"/>
    </location>
</feature>
<feature type="modified residue" description="Phosphoserine" evidence="2">
    <location>
        <position position="174"/>
    </location>
</feature>
<feature type="modified residue" description="Phosphoserine" evidence="2">
    <location>
        <position position="176"/>
    </location>
</feature>
<feature type="modified residue" description="N6-acetyllysine; by PCAF" evidence="2">
    <location>
        <position position="290"/>
    </location>
</feature>
<feature type="modified residue" description="Phosphoserine" evidence="2">
    <location>
        <position position="308"/>
    </location>
</feature>
<feature type="modified residue" description="Phosphoserine" evidence="2">
    <location>
        <position position="329"/>
    </location>
</feature>
<feature type="modified residue" description="Phosphothreonine" evidence="2">
    <location>
        <position position="330"/>
    </location>
</feature>
<feature type="modified residue" description="N6-acetyllysine; by PCAF" evidence="2">
    <location>
        <position position="332"/>
    </location>
</feature>
<feature type="modified residue" description="N6-acetyllysine; by PCAF" evidence="2">
    <location>
        <position position="338"/>
    </location>
</feature>
<feature type="modified residue" description="Phosphoserine; by PIM2; in vitro" evidence="3">
    <location>
        <position position="344"/>
    </location>
</feature>
<feature type="modified residue" description="Phosphoserine" evidence="2">
    <location>
        <position position="359"/>
    </location>
</feature>
<feature type="modified residue" description="Phosphoserine" evidence="2">
    <location>
        <position position="362"/>
    </location>
</feature>
<feature type="modified residue" description="Phosphoserine" evidence="2">
    <location>
        <position position="363"/>
    </location>
</feature>
<feature type="modified residue" description="N6-acetyllysine; by PCAF" evidence="2">
    <location>
        <position position="386"/>
    </location>
</feature>
<feature type="glycosylation site" description="O-linked (GlcNAc) threonine; alternate" evidence="1">
    <location>
        <position position="73"/>
    </location>
</feature>
<feature type="cross-link" description="Glycyl lysine isopeptide (Lys-Gly) (interchain with G-Cter in SUMO2)" evidence="2">
    <location>
        <position position="67"/>
    </location>
</feature>
<feature type="cross-link" description="Glycyl lysine isopeptide (Lys-Gly) (interchain with G-Cter in SUMO2); alternate" evidence="2">
    <location>
        <position position="158"/>
    </location>
</feature>
<feature type="cross-link" description="Glycyl lysine isopeptide (Lys-Gly) (interchain with G-Cter in SUMO2); alternate" evidence="2">
    <location>
        <position position="163"/>
    </location>
</feature>
<feature type="cross-link" description="Glycyl lysine isopeptide (Lys-Gly) (interchain with G-Cter in SUMO2)" evidence="2">
    <location>
        <position position="313"/>
    </location>
</feature>
<feature type="splice variant" id="VSP_061780" description="In isoform 1.">
    <location>
        <begin position="1"/>
        <end position="15"/>
    </location>
</feature>
<protein>
    <recommendedName>
        <fullName>Myc proto-oncogene protein</fullName>
    </recommendedName>
    <alternativeName>
        <fullName>Proto-oncogene c-Myc</fullName>
    </alternativeName>
    <alternativeName>
        <fullName>Transcription factor p64</fullName>
    </alternativeName>
</protein>